<gene>
    <name evidence="1" type="primary">mch</name>
    <name type="ordered locus">OE_3383R</name>
</gene>
<feature type="chain" id="PRO_1000126119" description="Methenyltetrahydromethanopterin cyclohydrolase">
    <location>
        <begin position="1"/>
        <end position="311"/>
    </location>
</feature>
<proteinExistence type="inferred from homology"/>
<sequence length="311" mass="32140">MESLNRMALELADEALEFTEELDIGAFELDTGTTVIDFGVEHDGGLEAGLLLAELQTAGLATVQTRVDTVGDATFPHVEVACDQPAVAMLGAQKAGWELAVDDYEALGSGPARALVATEGEFQAIDYVDAFEFAVLTLESTGLPTTAAASEVAARAGVTEESVFLPTYRTASVAGSVSAAARTVELAVFRLYELGYDPTDVLSASGCAPVAPVAGDEQTAIGRTNDALAHGGRVHLTVAEDFDAFDAVVSSAAARYDDPFAEVVGTDDWDAGDVDNGVFGPAQLTVDVVGGPTHAFGTVREDVLADGFGLS</sequence>
<evidence type="ECO:0000255" key="1">
    <source>
        <dbReference type="HAMAP-Rule" id="MF_00486"/>
    </source>
</evidence>
<comment type="function">
    <text evidence="1">Catalyzes the hydrolysis of methenyl-H(4)MPT(+) to 5-formyl-H(4)MPT.</text>
</comment>
<comment type="catalytic activity">
    <reaction evidence="1">
        <text>5,10-methenyl-5,6,7,8-tetrahydromethanopterin + H2O = N(5)-formyl-5,6,7,8-tetrahydromethanopterin + H(+)</text>
        <dbReference type="Rhea" id="RHEA:19053"/>
        <dbReference type="ChEBI" id="CHEBI:15377"/>
        <dbReference type="ChEBI" id="CHEBI:15378"/>
        <dbReference type="ChEBI" id="CHEBI:58018"/>
        <dbReference type="ChEBI" id="CHEBI:58337"/>
        <dbReference type="EC" id="3.5.4.27"/>
    </reaction>
</comment>
<comment type="subcellular location">
    <subcellularLocation>
        <location evidence="1">Cytoplasm</location>
    </subcellularLocation>
</comment>
<comment type="similarity">
    <text evidence="1">Belongs to the MCH family.</text>
</comment>
<name>MCH_HALS3</name>
<accession>B0R653</accession>
<keyword id="KW-0963">Cytoplasm</keyword>
<keyword id="KW-0378">Hydrolase</keyword>
<keyword id="KW-0554">One-carbon metabolism</keyword>
<protein>
    <recommendedName>
        <fullName evidence="1">Methenyltetrahydromethanopterin cyclohydrolase</fullName>
        <ecNumber evidence="1">3.5.4.27</ecNumber>
    </recommendedName>
    <alternativeName>
        <fullName evidence="1">Methenyl-H4MPT cyclohydrolase</fullName>
    </alternativeName>
</protein>
<reference key="1">
    <citation type="journal article" date="2008" name="Genomics">
        <title>Evolution in the laboratory: the genome of Halobacterium salinarum strain R1 compared to that of strain NRC-1.</title>
        <authorList>
            <person name="Pfeiffer F."/>
            <person name="Schuster S.C."/>
            <person name="Broicher A."/>
            <person name="Falb M."/>
            <person name="Palm P."/>
            <person name="Rodewald K."/>
            <person name="Ruepp A."/>
            <person name="Soppa J."/>
            <person name="Tittor J."/>
            <person name="Oesterhelt D."/>
        </authorList>
    </citation>
    <scope>NUCLEOTIDE SEQUENCE [LARGE SCALE GENOMIC DNA]</scope>
    <source>
        <strain>ATCC 29341 / DSM 671 / R1</strain>
    </source>
</reference>
<organism>
    <name type="scientific">Halobacterium salinarum (strain ATCC 29341 / DSM 671 / R1)</name>
    <dbReference type="NCBI Taxonomy" id="478009"/>
    <lineage>
        <taxon>Archaea</taxon>
        <taxon>Methanobacteriati</taxon>
        <taxon>Methanobacteriota</taxon>
        <taxon>Stenosarchaea group</taxon>
        <taxon>Halobacteria</taxon>
        <taxon>Halobacteriales</taxon>
        <taxon>Halobacteriaceae</taxon>
        <taxon>Halobacterium</taxon>
        <taxon>Halobacterium salinarum NRC-34001</taxon>
    </lineage>
</organism>
<dbReference type="EC" id="3.5.4.27" evidence="1"/>
<dbReference type="EMBL" id="AM774415">
    <property type="protein sequence ID" value="CAP14222.1"/>
    <property type="molecule type" value="Genomic_DNA"/>
</dbReference>
<dbReference type="RefSeq" id="WP_010903231.1">
    <property type="nucleotide sequence ID" value="NC_010364.1"/>
</dbReference>
<dbReference type="SMR" id="B0R653"/>
<dbReference type="EnsemblBacteria" id="CAP14222">
    <property type="protein sequence ID" value="CAP14222"/>
    <property type="gene ID" value="OE_3383R"/>
</dbReference>
<dbReference type="GeneID" id="89349933"/>
<dbReference type="KEGG" id="hsl:OE_3383R"/>
<dbReference type="HOGENOM" id="CLU_876031_0_0_2"/>
<dbReference type="PhylomeDB" id="B0R653"/>
<dbReference type="Proteomes" id="UP000001321">
    <property type="component" value="Chromosome"/>
</dbReference>
<dbReference type="GO" id="GO:0005737">
    <property type="term" value="C:cytoplasm"/>
    <property type="evidence" value="ECO:0007669"/>
    <property type="project" value="UniProtKB-SubCell"/>
</dbReference>
<dbReference type="GO" id="GO:0018759">
    <property type="term" value="F:methenyltetrahydromethanopterin cyclohydrolase activity"/>
    <property type="evidence" value="ECO:0007669"/>
    <property type="project" value="UniProtKB-UniRule"/>
</dbReference>
<dbReference type="GO" id="GO:0006730">
    <property type="term" value="P:one-carbon metabolic process"/>
    <property type="evidence" value="ECO:0007669"/>
    <property type="project" value="UniProtKB-UniRule"/>
</dbReference>
<dbReference type="CDD" id="cd00545">
    <property type="entry name" value="MCH"/>
    <property type="match status" value="1"/>
</dbReference>
<dbReference type="Gene3D" id="3.10.340.11">
    <property type="entry name" value="Methenyltetrahydromethanopterin Cyclohydrolase, Chain A, domain 1"/>
    <property type="match status" value="1"/>
</dbReference>
<dbReference type="Gene3D" id="3.30.1030.10">
    <property type="entry name" value="Methenyltetrahydromethanopterin Cyclohydrolase, Chain A, domain 2"/>
    <property type="match status" value="1"/>
</dbReference>
<dbReference type="HAMAP" id="MF_00486">
    <property type="entry name" value="McH"/>
    <property type="match status" value="1"/>
</dbReference>
<dbReference type="InterPro" id="IPR003209">
    <property type="entry name" value="METHMP_CycHdrlase"/>
</dbReference>
<dbReference type="NCBIfam" id="TIGR03120">
    <property type="entry name" value="one_C_mch"/>
    <property type="match status" value="1"/>
</dbReference>
<dbReference type="Pfam" id="PF02289">
    <property type="entry name" value="MCH"/>
    <property type="match status" value="1"/>
</dbReference>
<dbReference type="SUPFAM" id="SSF56199">
    <property type="entry name" value="Methenyltetrahydromethanopterin cyclohydrolase"/>
    <property type="match status" value="1"/>
</dbReference>